<organism>
    <name type="scientific">Mus pahari</name>
    <name type="common">Gairdner's shrew-mouse</name>
    <name type="synonym">Coelomys pahari</name>
    <dbReference type="NCBI Taxonomy" id="10093"/>
    <lineage>
        <taxon>Eukaryota</taxon>
        <taxon>Metazoa</taxon>
        <taxon>Chordata</taxon>
        <taxon>Craniata</taxon>
        <taxon>Vertebrata</taxon>
        <taxon>Euteleostomi</taxon>
        <taxon>Mammalia</taxon>
        <taxon>Eutheria</taxon>
        <taxon>Euarchontoglires</taxon>
        <taxon>Glires</taxon>
        <taxon>Rodentia</taxon>
        <taxon>Myomorpha</taxon>
        <taxon>Muroidea</taxon>
        <taxon>Muridae</taxon>
        <taxon>Murinae</taxon>
        <taxon>Mus</taxon>
        <taxon>Coelomys</taxon>
    </lineage>
</organism>
<name>S53A1_MUSPA</name>
<evidence type="ECO:0000250" key="1">
    <source>
        <dbReference type="UniProtKB" id="Q9UBH6"/>
    </source>
</evidence>
<evidence type="ECO:0000255" key="2">
    <source>
        <dbReference type="PROSITE-ProRule" id="PRU00712"/>
    </source>
</evidence>
<evidence type="ECO:0000256" key="3">
    <source>
        <dbReference type="SAM" id="MobiDB-lite"/>
    </source>
</evidence>
<evidence type="ECO:0000305" key="4"/>
<gene>
    <name type="primary">Xpr1</name>
</gene>
<protein>
    <recommendedName>
        <fullName evidence="1">Solute carrier family 53 member 1</fullName>
    </recommendedName>
    <alternativeName>
        <fullName evidence="1">Phosphate exporter SLC53A1</fullName>
    </alternativeName>
    <alternativeName>
        <fullName>Xenotropic and polytropic retrovirus receptor 1 homolog</fullName>
    </alternativeName>
</protein>
<keyword id="KW-1003">Cell membrane</keyword>
<keyword id="KW-0472">Membrane</keyword>
<keyword id="KW-0597">Phosphoprotein</keyword>
<keyword id="KW-0812">Transmembrane</keyword>
<keyword id="KW-1133">Transmembrane helix</keyword>
<feature type="chain" id="PRO_0000315857" description="Solute carrier family 53 member 1">
    <location>
        <begin position="1"/>
        <end position="696"/>
    </location>
</feature>
<feature type="topological domain" description="Cytoplasmic" evidence="1">
    <location>
        <begin position="1"/>
        <end position="228"/>
    </location>
</feature>
<feature type="transmembrane region" description="Helical; Name=1" evidence="1">
    <location>
        <begin position="229"/>
        <end position="259"/>
    </location>
</feature>
<feature type="topological domain" description="Extracellular" evidence="1">
    <location>
        <begin position="260"/>
        <end position="264"/>
    </location>
</feature>
<feature type="transmembrane region" description="Helical; Name=2" evidence="1">
    <location>
        <begin position="265"/>
        <end position="296"/>
    </location>
</feature>
<feature type="topological domain" description="Cytoplasmic" evidence="1">
    <location>
        <begin position="297"/>
        <end position="309"/>
    </location>
</feature>
<feature type="transmembrane region" description="Helical; Name=3" evidence="1">
    <location>
        <begin position="310"/>
        <end position="337"/>
    </location>
</feature>
<feature type="topological domain" description="Extracellular" evidence="1">
    <location>
        <begin position="338"/>
        <end position="343"/>
    </location>
</feature>
<feature type="transmembrane region" description="Helical; Name=4" evidence="1">
    <location>
        <begin position="344"/>
        <end position="365"/>
    </location>
</feature>
<feature type="intramembrane region" description="Helical" evidence="1">
    <location>
        <begin position="366"/>
        <end position="383"/>
    </location>
</feature>
<feature type="topological domain" description="Cytoplasmic" evidence="1">
    <location>
        <begin position="384"/>
        <end position="388"/>
    </location>
</feature>
<feature type="transmembrane region" description="Discontinuously helical; Name=5" evidence="1">
    <location>
        <begin position="389"/>
        <end position="422"/>
    </location>
</feature>
<feature type="topological domain" description="Extracellular" evidence="1">
    <location>
        <begin position="423"/>
        <end position="429"/>
    </location>
</feature>
<feature type="transmembrane region" description="Discontinuously helical; Name=6" evidence="1">
    <location>
        <begin position="430"/>
        <end position="471"/>
    </location>
</feature>
<feature type="topological domain" description="Cytoplasmic" evidence="1">
    <location>
        <position position="472"/>
    </location>
</feature>
<feature type="transmembrane region" description="Helical; Name=7" evidence="1">
    <location>
        <begin position="473"/>
        <end position="503"/>
    </location>
</feature>
<feature type="topological domain" description="Extracellular" evidence="1">
    <location>
        <begin position="504"/>
        <end position="506"/>
    </location>
</feature>
<feature type="transmembrane region" description="Helical; Name=8" evidence="1">
    <location>
        <begin position="507"/>
        <end position="534"/>
    </location>
</feature>
<feature type="topological domain" description="Cytoplasmic" evidence="1">
    <location>
        <begin position="535"/>
        <end position="553"/>
    </location>
</feature>
<feature type="transmembrane region" description="Discontinuously helical; Name=9" evidence="1">
    <location>
        <begin position="554"/>
        <end position="585"/>
    </location>
</feature>
<feature type="topological domain" description="Extracellular" evidence="1">
    <location>
        <begin position="586"/>
        <end position="587"/>
    </location>
</feature>
<feature type="transmembrane region" description="Helical; Name=10" evidence="1">
    <location>
        <begin position="588"/>
        <end position="626"/>
    </location>
</feature>
<feature type="topological domain" description="Cytoplasmic" evidence="1">
    <location>
        <begin position="627"/>
        <end position="696"/>
    </location>
</feature>
<feature type="domain" description="SPX" evidence="1">
    <location>
        <begin position="2"/>
        <end position="224"/>
    </location>
</feature>
<feature type="domain" description="EXS" evidence="2">
    <location>
        <begin position="439"/>
        <end position="643"/>
    </location>
</feature>
<feature type="region of interest" description="Important for inositol polyphosphate binding" evidence="1">
    <location>
        <begin position="158"/>
        <end position="165"/>
    </location>
</feature>
<feature type="region of interest" description="Disordered" evidence="3">
    <location>
        <begin position="672"/>
        <end position="696"/>
    </location>
</feature>
<feature type="binding site" evidence="1">
    <location>
        <position position="398"/>
    </location>
    <ligand>
        <name>phosphate</name>
        <dbReference type="ChEBI" id="CHEBI:43474"/>
    </ligand>
</feature>
<feature type="binding site" evidence="1">
    <location>
        <position position="401"/>
    </location>
    <ligand>
        <name>phosphate</name>
        <dbReference type="ChEBI" id="CHEBI:43474"/>
    </ligand>
</feature>
<feature type="binding site" evidence="1">
    <location>
        <position position="482"/>
    </location>
    <ligand>
        <name>phosphate</name>
        <dbReference type="ChEBI" id="CHEBI:43474"/>
    </ligand>
</feature>
<feature type="binding site" evidence="1">
    <location>
        <position position="483"/>
    </location>
    <ligand>
        <name>phosphate</name>
        <dbReference type="ChEBI" id="CHEBI:43474"/>
    </ligand>
</feature>
<feature type="binding site" evidence="1">
    <location>
        <position position="570"/>
    </location>
    <ligand>
        <name>phosphate</name>
        <dbReference type="ChEBI" id="CHEBI:43474"/>
    </ligand>
</feature>
<feature type="binding site" evidence="1">
    <location>
        <position position="603"/>
    </location>
    <ligand>
        <name>phosphate</name>
        <dbReference type="ChEBI" id="CHEBI:43474"/>
    </ligand>
</feature>
<feature type="binding site" evidence="1">
    <location>
        <position position="604"/>
    </location>
    <ligand>
        <name>phosphate</name>
        <dbReference type="ChEBI" id="CHEBI:43474"/>
    </ligand>
</feature>
<feature type="site" description="Gating residue for phosphate transport" evidence="1">
    <location>
        <position position="573"/>
    </location>
</feature>
<feature type="modified residue" description="Phosphoserine" evidence="1">
    <location>
        <position position="668"/>
    </location>
</feature>
<feature type="modified residue" description="Phosphothreonine" evidence="1">
    <location>
        <position position="690"/>
    </location>
</feature>
<accession>A7XZ53</accession>
<sequence>MKFAEHLSAHITPEWRKQYIQYEAFKDMLYSAQDQAPSVEVTDEDTVKRYFAKFEEKFFQTCEKELAKINTFYSEKLAEAQRRFATLQNELQSSLDVQKESSGVTTLRQRRKPVFHLSHEERVQHRNIKDLKLAFSEFYLSLILLQNYQNLNFTGFRKILKKHDKILETSRGADWRVIHVEVAPFYTCKKINQLISETEAVVTNELEDGDRQKAMKRLRVPPLGAAQPAPAWTTFRVGLFCGIFIVLNITLVFAAVFKLETDRTVWPLIRIYRGGFLLIEFLFLLGINTYGWRQAGVNHVLIFELNPRNNLSHQHLFEIAGFLGILWCLSLLACFFAPISIIPIYVYPLALYGFMVFFLINPTKTFYYKSRFWLLKLLFRVFTAPFHKVGFADFWLADQLNSLSVILMDLEYMICFYSFELKWDESKGLLPNDPQGPEFCHKYTYGVRAIVQCIPAWLRFIQCLRRYRDTRRAFPHLVNAGKYSTTFFTVTFAALYSTHKEQNHPDYKVFFYLWVFFCIISSCYTLIWDLKMDWGLFDKNAGENTFLREEIVYPQKAYYYCAIIEDVILRFAWTIQISITVTTFKPHVGDIIATVFAPLEVFRRFVWNFFRLENEHLNNCGEFRAVRDISVAPLNADDQTLLEQMMDQEDGVRNRQKNRSWKYNQSISLRRPRLASQSKARDTKVLIEDTDDEANT</sequence>
<reference key="1">
    <citation type="journal article" date="2007" name="J. Virol.">
        <title>Wild mouse variants of envelope genes of xenotropic/polytropic mouse gammaretroviruses and their XPR1 receptors elucidate receptor determinants of virus entry.</title>
        <authorList>
            <person name="Yan Y."/>
            <person name="Knoper R.C."/>
            <person name="Kozak C.A."/>
        </authorList>
    </citation>
    <scope>NUCLEOTIDE SEQUENCE [MRNA]</scope>
    <scope>FUNCTION (MICROBIAL INFECTION)</scope>
</reference>
<comment type="function">
    <text evidence="1">Inorganic ion transporter that mediates phosphate ion export across plasma membrane (By similarity). Plays a major role in phosphate homeostasis, preventing intracellular phosphate accumulation and possible calcium phosphate precipitation, ultimately preserving calcium signaling (By similarity). Binds inositol hexakisphosphate (Ins6P) and similar inositol polyphosphates, such as 5-diphospho-inositol pentakisphosphate (5-InsP7), which are important intracellular signaling molecules involved in regulation of phosphate flux (By similarity).</text>
</comment>
<comment type="catalytic activity">
    <reaction evidence="1">
        <text>phosphate(in) = phosphate(out)</text>
        <dbReference type="Rhea" id="RHEA:32823"/>
        <dbReference type="ChEBI" id="CHEBI:43474"/>
    </reaction>
    <physiologicalReaction direction="left-to-right" evidence="1">
        <dbReference type="Rhea" id="RHEA:32824"/>
    </physiologicalReaction>
</comment>
<comment type="subunit">
    <text evidence="1">Homodimer.</text>
</comment>
<comment type="subcellular location">
    <subcellularLocation>
        <location evidence="1">Cell membrane</location>
        <topology evidence="1">Multi-pass membrane protein</topology>
    </subcellularLocation>
</comment>
<comment type="domain">
    <text evidence="1">The SPX domain plays a role in the regulation of phosphate flux (By similarity). Inositol hexakisphosphate (Ins6P) is bound between two SPX domains of the homodimer (By similarity). The SPX domain has high affinity for inositol polyphosphates and its affinity for inorganic phosphate is two to three orders of magnitude lower (By similarity).</text>
</comment>
<comment type="similarity">
    <text evidence="4">Belongs to the SYG1 (TC 2.A.94) family.</text>
</comment>
<comment type="caution">
    <text>In contrast to the ortholog protein in related Mus species, does not act as a receptor for xenotropic and polytropic murine leukemia retroviruses.</text>
</comment>
<dbReference type="EMBL" id="EF606903">
    <property type="protein sequence ID" value="ABU63899.1"/>
    <property type="molecule type" value="mRNA"/>
</dbReference>
<dbReference type="RefSeq" id="XP_021053164.1">
    <property type="nucleotide sequence ID" value="XM_021197505.2"/>
</dbReference>
<dbReference type="SMR" id="A7XZ53"/>
<dbReference type="GeneID" id="110321289"/>
<dbReference type="MGI" id="MGI:97932">
    <property type="gene designation" value="Xpr1"/>
</dbReference>
<dbReference type="GO" id="GO:0005794">
    <property type="term" value="C:Golgi apparatus"/>
    <property type="evidence" value="ECO:0007669"/>
    <property type="project" value="TreeGrafter"/>
</dbReference>
<dbReference type="GO" id="GO:0005886">
    <property type="term" value="C:plasma membrane"/>
    <property type="evidence" value="ECO:0000250"/>
    <property type="project" value="UniProtKB"/>
</dbReference>
<dbReference type="GO" id="GO:0015562">
    <property type="term" value="F:efflux transmembrane transporter activity"/>
    <property type="evidence" value="ECO:0000250"/>
    <property type="project" value="UniProtKB"/>
</dbReference>
<dbReference type="GO" id="GO:0000822">
    <property type="term" value="F:inositol hexakisphosphate binding"/>
    <property type="evidence" value="ECO:0000250"/>
    <property type="project" value="UniProtKB"/>
</dbReference>
<dbReference type="GO" id="GO:0005315">
    <property type="term" value="F:phosphate transmembrane transporter activity"/>
    <property type="evidence" value="ECO:0000250"/>
    <property type="project" value="UniProtKB"/>
</dbReference>
<dbReference type="GO" id="GO:0001618">
    <property type="term" value="F:virus receptor activity"/>
    <property type="evidence" value="ECO:0007669"/>
    <property type="project" value="Ensembl"/>
</dbReference>
<dbReference type="GO" id="GO:0016036">
    <property type="term" value="P:cellular response to phosphate starvation"/>
    <property type="evidence" value="ECO:0007669"/>
    <property type="project" value="TreeGrafter"/>
</dbReference>
<dbReference type="GO" id="GO:0030643">
    <property type="term" value="P:intracellular phosphate ion homeostasis"/>
    <property type="evidence" value="ECO:0000250"/>
    <property type="project" value="UniProtKB"/>
</dbReference>
<dbReference type="GO" id="GO:0035435">
    <property type="term" value="P:phosphate ion transmembrane transport"/>
    <property type="evidence" value="ECO:0000250"/>
    <property type="project" value="UniProtKB"/>
</dbReference>
<dbReference type="GO" id="GO:0009615">
    <property type="term" value="P:response to virus"/>
    <property type="evidence" value="ECO:0007669"/>
    <property type="project" value="Ensembl"/>
</dbReference>
<dbReference type="CDD" id="cd14477">
    <property type="entry name" value="SPX_XPR1_like"/>
    <property type="match status" value="1"/>
</dbReference>
<dbReference type="InterPro" id="IPR004342">
    <property type="entry name" value="EXS_C"/>
</dbReference>
<dbReference type="InterPro" id="IPR004331">
    <property type="entry name" value="SPX_dom"/>
</dbReference>
<dbReference type="PANTHER" id="PTHR10783:SF103">
    <property type="entry name" value="SOLUTE CARRIER FAMILY 53 MEMBER 1"/>
    <property type="match status" value="1"/>
</dbReference>
<dbReference type="PANTHER" id="PTHR10783">
    <property type="entry name" value="XENOTROPIC AND POLYTROPIC RETROVIRUS RECEPTOR 1-RELATED"/>
    <property type="match status" value="1"/>
</dbReference>
<dbReference type="Pfam" id="PF03124">
    <property type="entry name" value="EXS"/>
    <property type="match status" value="1"/>
</dbReference>
<dbReference type="Pfam" id="PF03105">
    <property type="entry name" value="SPX"/>
    <property type="match status" value="3"/>
</dbReference>
<dbReference type="PROSITE" id="PS51380">
    <property type="entry name" value="EXS"/>
    <property type="match status" value="1"/>
</dbReference>
<dbReference type="PROSITE" id="PS51382">
    <property type="entry name" value="SPX"/>
    <property type="match status" value="1"/>
</dbReference>
<proteinExistence type="evidence at transcript level"/>